<proteinExistence type="inferred from homology"/>
<gene>
    <name evidence="1" type="primary">rpsD</name>
    <name type="ordered locus">Smal_0779</name>
</gene>
<name>RS4_STRM5</name>
<comment type="function">
    <text evidence="1">One of the primary rRNA binding proteins, it binds directly to 16S rRNA where it nucleates assembly of the body of the 30S subunit.</text>
</comment>
<comment type="function">
    <text evidence="1">With S5 and S12 plays an important role in translational accuracy.</text>
</comment>
<comment type="subunit">
    <text evidence="1">Part of the 30S ribosomal subunit. Contacts protein S5. The interaction surface between S4 and S5 is involved in control of translational fidelity.</text>
</comment>
<comment type="similarity">
    <text evidence="1">Belongs to the universal ribosomal protein uS4 family.</text>
</comment>
<accession>B4SLH4</accession>
<dbReference type="EMBL" id="CP001111">
    <property type="protein sequence ID" value="ACF50484.1"/>
    <property type="molecule type" value="Genomic_DNA"/>
</dbReference>
<dbReference type="RefSeq" id="WP_004145446.1">
    <property type="nucleotide sequence ID" value="NC_011071.1"/>
</dbReference>
<dbReference type="SMR" id="B4SLH4"/>
<dbReference type="STRING" id="391008.Smal_0779"/>
<dbReference type="GeneID" id="97259957"/>
<dbReference type="KEGG" id="smt:Smal_0779"/>
<dbReference type="eggNOG" id="COG0522">
    <property type="taxonomic scope" value="Bacteria"/>
</dbReference>
<dbReference type="HOGENOM" id="CLU_092403_0_2_6"/>
<dbReference type="OrthoDB" id="9803672at2"/>
<dbReference type="Proteomes" id="UP000001867">
    <property type="component" value="Chromosome"/>
</dbReference>
<dbReference type="GO" id="GO:0015935">
    <property type="term" value="C:small ribosomal subunit"/>
    <property type="evidence" value="ECO:0007669"/>
    <property type="project" value="InterPro"/>
</dbReference>
<dbReference type="GO" id="GO:0019843">
    <property type="term" value="F:rRNA binding"/>
    <property type="evidence" value="ECO:0007669"/>
    <property type="project" value="UniProtKB-UniRule"/>
</dbReference>
<dbReference type="GO" id="GO:0003735">
    <property type="term" value="F:structural constituent of ribosome"/>
    <property type="evidence" value="ECO:0007669"/>
    <property type="project" value="InterPro"/>
</dbReference>
<dbReference type="GO" id="GO:0042274">
    <property type="term" value="P:ribosomal small subunit biogenesis"/>
    <property type="evidence" value="ECO:0007669"/>
    <property type="project" value="TreeGrafter"/>
</dbReference>
<dbReference type="GO" id="GO:0006412">
    <property type="term" value="P:translation"/>
    <property type="evidence" value="ECO:0007669"/>
    <property type="project" value="UniProtKB-UniRule"/>
</dbReference>
<dbReference type="CDD" id="cd00165">
    <property type="entry name" value="S4"/>
    <property type="match status" value="1"/>
</dbReference>
<dbReference type="FunFam" id="1.10.1050.10:FF:000001">
    <property type="entry name" value="30S ribosomal protein S4"/>
    <property type="match status" value="1"/>
</dbReference>
<dbReference type="FunFam" id="3.10.290.10:FF:000001">
    <property type="entry name" value="30S ribosomal protein S4"/>
    <property type="match status" value="1"/>
</dbReference>
<dbReference type="Gene3D" id="1.10.1050.10">
    <property type="entry name" value="Ribosomal Protein S4 Delta 41, Chain A, domain 1"/>
    <property type="match status" value="1"/>
</dbReference>
<dbReference type="Gene3D" id="3.10.290.10">
    <property type="entry name" value="RNA-binding S4 domain"/>
    <property type="match status" value="1"/>
</dbReference>
<dbReference type="HAMAP" id="MF_01306_B">
    <property type="entry name" value="Ribosomal_uS4_B"/>
    <property type="match status" value="1"/>
</dbReference>
<dbReference type="InterPro" id="IPR022801">
    <property type="entry name" value="Ribosomal_uS4"/>
</dbReference>
<dbReference type="InterPro" id="IPR005709">
    <property type="entry name" value="Ribosomal_uS4_bac-type"/>
</dbReference>
<dbReference type="InterPro" id="IPR018079">
    <property type="entry name" value="Ribosomal_uS4_CS"/>
</dbReference>
<dbReference type="InterPro" id="IPR001912">
    <property type="entry name" value="Ribosomal_uS4_N"/>
</dbReference>
<dbReference type="InterPro" id="IPR002942">
    <property type="entry name" value="S4_RNA-bd"/>
</dbReference>
<dbReference type="InterPro" id="IPR036986">
    <property type="entry name" value="S4_RNA-bd_sf"/>
</dbReference>
<dbReference type="NCBIfam" id="NF003717">
    <property type="entry name" value="PRK05327.1"/>
    <property type="match status" value="1"/>
</dbReference>
<dbReference type="NCBIfam" id="TIGR01017">
    <property type="entry name" value="rpsD_bact"/>
    <property type="match status" value="1"/>
</dbReference>
<dbReference type="PANTHER" id="PTHR11831">
    <property type="entry name" value="30S 40S RIBOSOMAL PROTEIN"/>
    <property type="match status" value="1"/>
</dbReference>
<dbReference type="PANTHER" id="PTHR11831:SF4">
    <property type="entry name" value="SMALL RIBOSOMAL SUBUNIT PROTEIN US4M"/>
    <property type="match status" value="1"/>
</dbReference>
<dbReference type="Pfam" id="PF00163">
    <property type="entry name" value="Ribosomal_S4"/>
    <property type="match status" value="1"/>
</dbReference>
<dbReference type="Pfam" id="PF01479">
    <property type="entry name" value="S4"/>
    <property type="match status" value="1"/>
</dbReference>
<dbReference type="SMART" id="SM01390">
    <property type="entry name" value="Ribosomal_S4"/>
    <property type="match status" value="1"/>
</dbReference>
<dbReference type="SMART" id="SM00363">
    <property type="entry name" value="S4"/>
    <property type="match status" value="1"/>
</dbReference>
<dbReference type="SUPFAM" id="SSF55174">
    <property type="entry name" value="Alpha-L RNA-binding motif"/>
    <property type="match status" value="1"/>
</dbReference>
<dbReference type="PROSITE" id="PS00632">
    <property type="entry name" value="RIBOSOMAL_S4"/>
    <property type="match status" value="1"/>
</dbReference>
<dbReference type="PROSITE" id="PS50889">
    <property type="entry name" value="S4"/>
    <property type="match status" value="1"/>
</dbReference>
<organism>
    <name type="scientific">Stenotrophomonas maltophilia (strain R551-3)</name>
    <dbReference type="NCBI Taxonomy" id="391008"/>
    <lineage>
        <taxon>Bacteria</taxon>
        <taxon>Pseudomonadati</taxon>
        <taxon>Pseudomonadota</taxon>
        <taxon>Gammaproteobacteria</taxon>
        <taxon>Lysobacterales</taxon>
        <taxon>Lysobacteraceae</taxon>
        <taxon>Stenotrophomonas</taxon>
        <taxon>Stenotrophomonas maltophilia group</taxon>
    </lineage>
</organism>
<feature type="chain" id="PRO_1000140797" description="Small ribosomal subunit protein uS4">
    <location>
        <begin position="1"/>
        <end position="209"/>
    </location>
</feature>
<feature type="domain" description="S4 RNA-binding" evidence="1">
    <location>
        <begin position="98"/>
        <end position="161"/>
    </location>
</feature>
<reference key="1">
    <citation type="submission" date="2008-06" db="EMBL/GenBank/DDBJ databases">
        <title>Complete sequence of Stenotrophomonas maltophilia R551-3.</title>
        <authorList>
            <consortium name="US DOE Joint Genome Institute"/>
            <person name="Lucas S."/>
            <person name="Copeland A."/>
            <person name="Lapidus A."/>
            <person name="Glavina del Rio T."/>
            <person name="Dalin E."/>
            <person name="Tice H."/>
            <person name="Pitluck S."/>
            <person name="Chain P."/>
            <person name="Malfatti S."/>
            <person name="Shin M."/>
            <person name="Vergez L."/>
            <person name="Lang D."/>
            <person name="Schmutz J."/>
            <person name="Larimer F."/>
            <person name="Land M."/>
            <person name="Hauser L."/>
            <person name="Kyrpides N."/>
            <person name="Mikhailova N."/>
            <person name="Taghavi S."/>
            <person name="Monchy S."/>
            <person name="Newman L."/>
            <person name="Vangronsveld J."/>
            <person name="van der Lelie D."/>
            <person name="Richardson P."/>
        </authorList>
    </citation>
    <scope>NUCLEOTIDE SEQUENCE [LARGE SCALE GENOMIC DNA]</scope>
    <source>
        <strain>R551-3</strain>
    </source>
</reference>
<sequence>MARYIGPTCKLARREGADLSLKSPARALDSKCKLEQKPGQHGATARKGKLSDYATQLREKQKVKRIYGLLERQFRNYYKKASTKKGNTGENLLQLLETRLDNVVYRMGFAVTRPAARQLVSHRGVTVNGKSVNLASYQVKAGDAIALSEKAAKQLRVQEALTVAAQHDLSPSWVEVDSGKFTGIFKAVPDRSDLPADINEALIVELYSK</sequence>
<evidence type="ECO:0000255" key="1">
    <source>
        <dbReference type="HAMAP-Rule" id="MF_01306"/>
    </source>
</evidence>
<evidence type="ECO:0000305" key="2"/>
<keyword id="KW-0687">Ribonucleoprotein</keyword>
<keyword id="KW-0689">Ribosomal protein</keyword>
<keyword id="KW-0694">RNA-binding</keyword>
<keyword id="KW-0699">rRNA-binding</keyword>
<protein>
    <recommendedName>
        <fullName evidence="1">Small ribosomal subunit protein uS4</fullName>
    </recommendedName>
    <alternativeName>
        <fullName evidence="2">30S ribosomal protein S4</fullName>
    </alternativeName>
</protein>